<protein>
    <recommendedName>
        <fullName>Olfactomedin-like protein 3A</fullName>
    </recommendedName>
</protein>
<reference key="1">
    <citation type="submission" date="2006-03" db="EMBL/GenBank/DDBJ databases">
        <authorList>
            <consortium name="NIH - Zebrafish Gene Collection (ZGC) project"/>
        </authorList>
    </citation>
    <scope>NUCLEOTIDE SEQUENCE [LARGE SCALE MRNA]</scope>
</reference>
<evidence type="ECO:0000250" key="1"/>
<evidence type="ECO:0000255" key="2"/>
<evidence type="ECO:0000255" key="3">
    <source>
        <dbReference type="PROSITE-ProRule" id="PRU00446"/>
    </source>
</evidence>
<evidence type="ECO:0000305" key="4"/>
<organism>
    <name type="scientific">Danio rerio</name>
    <name type="common">Zebrafish</name>
    <name type="synonym">Brachydanio rerio</name>
    <dbReference type="NCBI Taxonomy" id="7955"/>
    <lineage>
        <taxon>Eukaryota</taxon>
        <taxon>Metazoa</taxon>
        <taxon>Chordata</taxon>
        <taxon>Craniata</taxon>
        <taxon>Vertebrata</taxon>
        <taxon>Euteleostomi</taxon>
        <taxon>Actinopterygii</taxon>
        <taxon>Neopterygii</taxon>
        <taxon>Teleostei</taxon>
        <taxon>Ostariophysi</taxon>
        <taxon>Cypriniformes</taxon>
        <taxon>Danionidae</taxon>
        <taxon>Danioninae</taxon>
        <taxon>Danio</taxon>
    </lineage>
</organism>
<sequence length="390" mass="44506">MRALQLLVLVLSGLVGAQQQALMDYLERRLLAIEDRISLWHEQTSRYASELREFKQQMVAQLEGLDKSKEALRSELDTVGTRVDRVEREMDYLETQNGAQPCVDVDDKLVEQQVTFVKERNKAKYAKLTDCSDMISSIKAMKILKRVGGAKGMWTKDMGSATGKVYILNGTDDNTVFEFGTVREFTSSQGTSGATTIQLPSAWRGMGHAIYNNHMYYLKQGEEMKLIKFDLQKNIIVDSAVFPVKNQLPVYSLNPETFIDLAVDEEGLWAIYATQENERHISLAKIDPKTLDIQQMWDTPCVRENAEAAFVICGTVYVVYNSKLPSRSRIQCVFDVSDMVNNDEAPHVYFPKRYGTHSSLKYSPVEQLLYAWDDGYQILYKLQLKKKLEV</sequence>
<keyword id="KW-0175">Coiled coil</keyword>
<keyword id="KW-0217">Developmental protein</keyword>
<keyword id="KW-1015">Disulfide bond</keyword>
<keyword id="KW-0325">Glycoprotein</keyword>
<keyword id="KW-1185">Reference proteome</keyword>
<keyword id="KW-0964">Secreted</keyword>
<keyword id="KW-0732">Signal</keyword>
<name>OLF3A_DANRE</name>
<proteinExistence type="evidence at transcript level"/>
<feature type="signal peptide" evidence="2">
    <location>
        <begin position="1"/>
        <end position="17"/>
    </location>
</feature>
<feature type="chain" id="PRO_0000361563" description="Olfactomedin-like protein 3A">
    <location>
        <begin position="18"/>
        <end position="390"/>
    </location>
</feature>
<feature type="domain" description="Olfactomedin-like" evidence="3">
    <location>
        <begin position="130"/>
        <end position="386"/>
    </location>
</feature>
<feature type="coiled-coil region" evidence="2">
    <location>
        <begin position="18"/>
        <end position="91"/>
    </location>
</feature>
<feature type="glycosylation site" description="N-linked (GlcNAc...) asparagine" evidence="2">
    <location>
        <position position="169"/>
    </location>
</feature>
<feature type="disulfide bond" evidence="3">
    <location>
        <begin position="131"/>
        <end position="313"/>
    </location>
</feature>
<gene>
    <name type="primary">olfml3a</name>
    <name type="synonym">olfml3</name>
    <name type="ORF">zgc:153815</name>
</gene>
<comment type="function">
    <text evidence="1">Secreted scaffold protein that plays an essential role in dorsoventral patterning during early development. Stabilizes axial formation by restricting chordin (CHRD) activity on the dorsal side. Acts by facilitating the association between the tolloid proteases and their substrate chordin (CHRD), leading to enhance chordin (CHRD) degradation (By similarity).</text>
</comment>
<comment type="subcellular location">
    <subcellularLocation>
        <location evidence="1">Secreted</location>
    </subcellularLocation>
</comment>
<comment type="similarity">
    <text evidence="4">Belongs to the OLFML3 family.</text>
</comment>
<comment type="sequence caution" evidence="4">
    <conflict type="erroneous initiation">
        <sequence resource="EMBL-CDS" id="AAI14288"/>
    </conflict>
</comment>
<accession>Q29RB4</accession>
<accession>Q08BF8</accession>
<dbReference type="EMBL" id="BC114287">
    <property type="protein sequence ID" value="AAI14288.1"/>
    <property type="status" value="ALT_INIT"/>
    <property type="molecule type" value="mRNA"/>
</dbReference>
<dbReference type="EMBL" id="BC124742">
    <property type="protein sequence ID" value="AAI24743.1"/>
    <property type="molecule type" value="mRNA"/>
</dbReference>
<dbReference type="RefSeq" id="NP_001070719.1">
    <property type="nucleotide sequence ID" value="NM_001077251.1"/>
</dbReference>
<dbReference type="SMR" id="Q29RB4"/>
<dbReference type="FunCoup" id="Q29RB4">
    <property type="interactions" value="1501"/>
</dbReference>
<dbReference type="STRING" id="7955.ENSDARP00000084034"/>
<dbReference type="GlyCosmos" id="Q29RB4">
    <property type="glycosylation" value="1 site, No reported glycans"/>
</dbReference>
<dbReference type="PaxDb" id="7955-ENSDARP00000084034"/>
<dbReference type="Ensembl" id="ENSDART00000089601">
    <property type="protein sequence ID" value="ENSDARP00000084034"/>
    <property type="gene ID" value="ENSDARG00000062171"/>
</dbReference>
<dbReference type="GeneID" id="562022"/>
<dbReference type="KEGG" id="dre:562022"/>
<dbReference type="AGR" id="ZFIN:ZDB-GENE-050302-161"/>
<dbReference type="CTD" id="562022"/>
<dbReference type="ZFIN" id="ZDB-GENE-050302-161">
    <property type="gene designation" value="olfml3b"/>
</dbReference>
<dbReference type="eggNOG" id="KOG3545">
    <property type="taxonomic scope" value="Eukaryota"/>
</dbReference>
<dbReference type="HOGENOM" id="CLU_035236_2_1_1"/>
<dbReference type="InParanoid" id="Q29RB4"/>
<dbReference type="OMA" id="QQQFMEY"/>
<dbReference type="OrthoDB" id="8626508at2759"/>
<dbReference type="PhylomeDB" id="Q29RB4"/>
<dbReference type="TreeFam" id="TF352000"/>
<dbReference type="PRO" id="PR:Q29RB4"/>
<dbReference type="Proteomes" id="UP000000437">
    <property type="component" value="Alternate scaffold 11"/>
</dbReference>
<dbReference type="Proteomes" id="UP000000437">
    <property type="component" value="Chromosome 11"/>
</dbReference>
<dbReference type="Bgee" id="ENSDARG00000062171">
    <property type="expression patterns" value="Expressed in swim bladder and 21 other cell types or tissues"/>
</dbReference>
<dbReference type="GO" id="GO:0005615">
    <property type="term" value="C:extracellular space"/>
    <property type="evidence" value="ECO:0000318"/>
    <property type="project" value="GO_Central"/>
</dbReference>
<dbReference type="GO" id="GO:0007165">
    <property type="term" value="P:signal transduction"/>
    <property type="evidence" value="ECO:0000318"/>
    <property type="project" value="GO_Central"/>
</dbReference>
<dbReference type="InterPro" id="IPR003112">
    <property type="entry name" value="Olfac-like_dom"/>
</dbReference>
<dbReference type="InterPro" id="IPR050605">
    <property type="entry name" value="Olfactomedin-like_domain"/>
</dbReference>
<dbReference type="PANTHER" id="PTHR23192:SF8">
    <property type="entry name" value="OLFACTOMEDIN-LIKE PROTEIN 3"/>
    <property type="match status" value="1"/>
</dbReference>
<dbReference type="PANTHER" id="PTHR23192">
    <property type="entry name" value="OLFACTOMEDIN-RELATED"/>
    <property type="match status" value="1"/>
</dbReference>
<dbReference type="Pfam" id="PF02191">
    <property type="entry name" value="OLF"/>
    <property type="match status" value="1"/>
</dbReference>
<dbReference type="SMART" id="SM00284">
    <property type="entry name" value="OLF"/>
    <property type="match status" value="1"/>
</dbReference>
<dbReference type="PROSITE" id="PS51132">
    <property type="entry name" value="OLF"/>
    <property type="match status" value="1"/>
</dbReference>